<reference key="1">
    <citation type="journal article" date="2002" name="Microbiology">
        <title>Molecular and genetic analysis of the Cryptococcus neoformans MET3 gene and a met3 mutant.</title>
        <authorList>
            <person name="Yang Z."/>
            <person name="Pascon R.C."/>
            <person name="Alspaugh A."/>
            <person name="Cox G.M."/>
            <person name="McCusker J.H."/>
        </authorList>
    </citation>
    <scope>NUCLEOTIDE SEQUENCE [GENOMIC DNA / MRNA]</scope>
    <source>
        <strain>H99 / ATCC 208821 / CBS 10515 / FGSC 9487</strain>
    </source>
</reference>
<reference key="2">
    <citation type="journal article" date="2014" name="PLoS Genet.">
        <title>Analysis of the genome and transcriptome of Cryptococcus neoformans var. grubii reveals complex RNA expression and microevolution leading to virulence attenuation.</title>
        <authorList>
            <person name="Janbon G."/>
            <person name="Ormerod K.L."/>
            <person name="Paulet D."/>
            <person name="Byrnes E.J. III"/>
            <person name="Yadav V."/>
            <person name="Chatterjee G."/>
            <person name="Mullapudi N."/>
            <person name="Hon C.-C."/>
            <person name="Billmyre R.B."/>
            <person name="Brunel F."/>
            <person name="Bahn Y.-S."/>
            <person name="Chen W."/>
            <person name="Chen Y."/>
            <person name="Chow E.W.L."/>
            <person name="Coppee J.-Y."/>
            <person name="Floyd-Averette A."/>
            <person name="Gaillardin C."/>
            <person name="Gerik K.J."/>
            <person name="Goldberg J."/>
            <person name="Gonzalez-Hilarion S."/>
            <person name="Gujja S."/>
            <person name="Hamlin J.L."/>
            <person name="Hsueh Y.-P."/>
            <person name="Ianiri G."/>
            <person name="Jones S."/>
            <person name="Kodira C.D."/>
            <person name="Kozubowski L."/>
            <person name="Lam W."/>
            <person name="Marra M."/>
            <person name="Mesner L.D."/>
            <person name="Mieczkowski P.A."/>
            <person name="Moyrand F."/>
            <person name="Nielsen K."/>
            <person name="Proux C."/>
            <person name="Rossignol T."/>
            <person name="Schein J.E."/>
            <person name="Sun S."/>
            <person name="Wollschlaeger C."/>
            <person name="Wood I.A."/>
            <person name="Zeng Q."/>
            <person name="Neuveglise C."/>
            <person name="Newlon C.S."/>
            <person name="Perfect J.R."/>
            <person name="Lodge J.K."/>
            <person name="Idnurm A."/>
            <person name="Stajich J.E."/>
            <person name="Kronstad J.W."/>
            <person name="Sanyal K."/>
            <person name="Heitman J."/>
            <person name="Fraser J.A."/>
            <person name="Cuomo C.A."/>
            <person name="Dietrich F.S."/>
        </authorList>
    </citation>
    <scope>NUCLEOTIDE SEQUENCE [LARGE SCALE GENOMIC DNA]</scope>
    <source>
        <strain>H99 / ATCC 208821 / CBS 10515 / FGSC 9487</strain>
    </source>
</reference>
<accession>Q8TG24</accession>
<accession>J9VR79</accession>
<accession>Q96UP1</accession>
<sequence length="581" mass="64515">MANAPHGGVLKDLLVRDAALHDSLLEEARSLNDIFLTERQLCDLELILNGGFSPLEGFMDEQDYTSVVETLRLAPFNGHKYGHVFPIPITLDVSQEDINTLGLKQGARVALRDPRDDAALAILTVSDIYRPNKATEAEKVMGADDIAHPSVAYLRNNVKEFYVGGKVQAIQAPTHFDYVPLRYTPAELRAHFHKLAWRKVVAFQTRNPMHRAHRELTVRAARQRRANVLIHPVVGLTKPGDVDHYTRVRAYQALMPSYPEGMAHLALLPLAMRMAGPREAVWHAVIRKNFGATHFIVGRDHAGPGKNSQGKDFYGPYDAQELVTQFKDELQIEMVPFQAMTYLPGSDEYQPVDEVPKGTPTADISGTELRKRLRTGASIPDWFSYTGVVKVLRESYPPRPQQGFTILLTGLHNSGKDTIARALQVTLQQQGSRSVSLLLGEELRSDLDPQIGRAITPEQKHINLERIGFVAAELTKAGAAVIAAPTAPYERSRQAFKKQVVGSGGGNYFLVHVATPLEWCEKVDRRGLYKAARAGEIKNLTGVDDVYEAPENADLVCDLRIDTVPEIVHSIIMILESQNLV</sequence>
<feature type="chain" id="PRO_0000283684" description="Sulfate adenylyltransferase">
    <location>
        <begin position="1"/>
        <end position="581"/>
    </location>
</feature>
<feature type="region of interest" description="N-terminal" evidence="1">
    <location>
        <begin position="1"/>
        <end position="176"/>
    </location>
</feature>
<feature type="region of interest" description="Catalytic" evidence="1">
    <location>
        <begin position="177"/>
        <end position="401"/>
    </location>
</feature>
<feature type="region of interest" description="Allosteric regulation domain; adenylyl-sulfate kinase-like" evidence="1">
    <location>
        <begin position="402"/>
        <end position="581"/>
    </location>
</feature>
<feature type="active site" evidence="1">
    <location>
        <position position="205"/>
    </location>
</feature>
<feature type="active site" evidence="1">
    <location>
        <position position="206"/>
    </location>
</feature>
<feature type="active site" evidence="1">
    <location>
        <position position="207"/>
    </location>
</feature>
<feature type="binding site" evidence="1">
    <location>
        <begin position="204"/>
        <end position="207"/>
    </location>
    <ligand>
        <name>ATP</name>
        <dbReference type="ChEBI" id="CHEBI:30616"/>
    </ligand>
</feature>
<feature type="binding site" evidence="1">
    <location>
        <position position="204"/>
    </location>
    <ligand>
        <name>sulfate</name>
        <dbReference type="ChEBI" id="CHEBI:16189"/>
    </ligand>
</feature>
<feature type="binding site" evidence="1">
    <location>
        <position position="206"/>
    </location>
    <ligand>
        <name>sulfate</name>
        <dbReference type="ChEBI" id="CHEBI:16189"/>
    </ligand>
</feature>
<feature type="binding site" evidence="1">
    <location>
        <begin position="298"/>
        <end position="301"/>
    </location>
    <ligand>
        <name>ATP</name>
        <dbReference type="ChEBI" id="CHEBI:30616"/>
    </ligand>
</feature>
<feature type="binding site" evidence="1">
    <location>
        <position position="302"/>
    </location>
    <ligand>
        <name>sulfate</name>
        <dbReference type="ChEBI" id="CHEBI:16189"/>
    </ligand>
</feature>
<feature type="binding site" evidence="1">
    <location>
        <position position="340"/>
    </location>
    <ligand>
        <name>ATP</name>
        <dbReference type="ChEBI" id="CHEBI:30616"/>
    </ligand>
</feature>
<feature type="binding site" evidence="1">
    <location>
        <begin position="441"/>
        <end position="444"/>
    </location>
    <ligand>
        <name>3'-phosphoadenylyl sulfate</name>
        <dbReference type="ChEBI" id="CHEBI:58339"/>
        <note>allosteric inhibitor</note>
    </ligand>
</feature>
<feature type="binding site" evidence="1">
    <location>
        <begin position="486"/>
        <end position="487"/>
    </location>
    <ligand>
        <name>3'-phosphoadenylyl sulfate</name>
        <dbReference type="ChEBI" id="CHEBI:58339"/>
        <note>allosteric inhibitor</note>
    </ligand>
</feature>
<feature type="binding site" evidence="1">
    <location>
        <position position="526"/>
    </location>
    <ligand>
        <name>3'-phosphoadenylyl sulfate</name>
        <dbReference type="ChEBI" id="CHEBI:58339"/>
        <note>allosteric inhibitor</note>
    </ligand>
</feature>
<feature type="site" description="Transition state stabilizer" evidence="1">
    <location>
        <position position="210"/>
    </location>
</feature>
<feature type="site" description="Transition state stabilizer" evidence="1">
    <location>
        <position position="213"/>
    </location>
</feature>
<feature type="site" description="Induces change in substrate recognition on ATP binding" evidence="1">
    <location>
        <position position="337"/>
    </location>
</feature>
<feature type="sequence conflict" description="In Ref. 1; AAK61369." evidence="2" ref="1">
    <original>T</original>
    <variation>N</variation>
    <location>
        <position position="293"/>
    </location>
</feature>
<feature type="sequence conflict" description="In Ref. 1; AAK61369." evidence="2" ref="1">
    <original>T</original>
    <variation>N</variation>
    <location>
        <position position="405"/>
    </location>
</feature>
<evidence type="ECO:0000255" key="1">
    <source>
        <dbReference type="HAMAP-Rule" id="MF_03106"/>
    </source>
</evidence>
<evidence type="ECO:0000305" key="2"/>
<organism>
    <name type="scientific">Cryptococcus neoformans var. grubii serotype A (strain H99 / ATCC 208821 / CBS 10515 / FGSC 9487)</name>
    <name type="common">Filobasidiella neoformans var. grubii</name>
    <dbReference type="NCBI Taxonomy" id="235443"/>
    <lineage>
        <taxon>Eukaryota</taxon>
        <taxon>Fungi</taxon>
        <taxon>Dikarya</taxon>
        <taxon>Basidiomycota</taxon>
        <taxon>Agaricomycotina</taxon>
        <taxon>Tremellomycetes</taxon>
        <taxon>Tremellales</taxon>
        <taxon>Cryptococcaceae</taxon>
        <taxon>Cryptococcus</taxon>
        <taxon>Cryptococcus neoformans species complex</taxon>
    </lineage>
</organism>
<protein>
    <recommendedName>
        <fullName evidence="1">Sulfate adenylyltransferase</fullName>
        <ecNumber evidence="1">2.7.7.4</ecNumber>
    </recommendedName>
    <alternativeName>
        <fullName evidence="1">ATP-sulfurylase</fullName>
    </alternativeName>
    <alternativeName>
        <fullName evidence="1">Sulfate adenylate transferase</fullName>
        <shortName evidence="1">SAT</shortName>
    </alternativeName>
</protein>
<keyword id="KW-0021">Allosteric enzyme</keyword>
<keyword id="KW-0028">Amino-acid biosynthesis</keyword>
<keyword id="KW-0067">ATP-binding</keyword>
<keyword id="KW-0198">Cysteine biosynthesis</keyword>
<keyword id="KW-0963">Cytoplasm</keyword>
<keyword id="KW-0486">Methionine biosynthesis</keyword>
<keyword id="KW-0547">Nucleotide-binding</keyword>
<keyword id="KW-0548">Nucleotidyltransferase</keyword>
<keyword id="KW-0808">Transferase</keyword>
<gene>
    <name evidence="1" type="primary">MET3</name>
    <name type="ORF">CNAG_04215</name>
</gene>
<dbReference type="EC" id="2.7.7.4" evidence="1"/>
<dbReference type="EMBL" id="AF489498">
    <property type="protein sequence ID" value="AAL92174.1"/>
    <property type="molecule type" value="Genomic_DNA"/>
</dbReference>
<dbReference type="EMBL" id="AY035556">
    <property type="protein sequence ID" value="AAK61369.1"/>
    <property type="molecule type" value="mRNA"/>
</dbReference>
<dbReference type="EMBL" id="CP003828">
    <property type="protein sequence ID" value="AFR96947.1"/>
    <property type="molecule type" value="Genomic_DNA"/>
</dbReference>
<dbReference type="RefSeq" id="XP_012051668.1">
    <property type="nucleotide sequence ID" value="XM_012196278.1"/>
</dbReference>
<dbReference type="SMR" id="Q8TG24"/>
<dbReference type="SwissPalm" id="Q8TG24"/>
<dbReference type="GeneID" id="23887653"/>
<dbReference type="KEGG" id="cng:CNAG_04215"/>
<dbReference type="VEuPathDB" id="FungiDB:CNAG_04215"/>
<dbReference type="HOGENOM" id="CLU_022950_0_0_1"/>
<dbReference type="OrthoDB" id="2084at5206"/>
<dbReference type="UniPathway" id="UPA00140">
    <property type="reaction ID" value="UER00204"/>
</dbReference>
<dbReference type="PHI-base" id="PHI:265"/>
<dbReference type="Proteomes" id="UP000010091">
    <property type="component" value="Chromosome 9"/>
</dbReference>
<dbReference type="GO" id="GO:0005737">
    <property type="term" value="C:cytoplasm"/>
    <property type="evidence" value="ECO:0007669"/>
    <property type="project" value="UniProtKB-SubCell"/>
</dbReference>
<dbReference type="GO" id="GO:0004020">
    <property type="term" value="F:adenylylsulfate kinase activity"/>
    <property type="evidence" value="ECO:0007669"/>
    <property type="project" value="InterPro"/>
</dbReference>
<dbReference type="GO" id="GO:0005524">
    <property type="term" value="F:ATP binding"/>
    <property type="evidence" value="ECO:0007669"/>
    <property type="project" value="UniProtKB-KW"/>
</dbReference>
<dbReference type="GO" id="GO:0004781">
    <property type="term" value="F:sulfate adenylyltransferase (ATP) activity"/>
    <property type="evidence" value="ECO:0007669"/>
    <property type="project" value="UniProtKB-UniRule"/>
</dbReference>
<dbReference type="GO" id="GO:0019344">
    <property type="term" value="P:cysteine biosynthetic process"/>
    <property type="evidence" value="ECO:0007669"/>
    <property type="project" value="UniProtKB-KW"/>
</dbReference>
<dbReference type="GO" id="GO:0070814">
    <property type="term" value="P:hydrogen sulfide biosynthetic process"/>
    <property type="evidence" value="ECO:0007669"/>
    <property type="project" value="UniProtKB-UniRule"/>
</dbReference>
<dbReference type="GO" id="GO:0009086">
    <property type="term" value="P:methionine biosynthetic process"/>
    <property type="evidence" value="ECO:0007669"/>
    <property type="project" value="UniProtKB-KW"/>
</dbReference>
<dbReference type="GO" id="GO:0010134">
    <property type="term" value="P:sulfate assimilation via adenylyl sulfate reduction"/>
    <property type="evidence" value="ECO:0007669"/>
    <property type="project" value="TreeGrafter"/>
</dbReference>
<dbReference type="GO" id="GO:0019379">
    <property type="term" value="P:sulfate assimilation, phosphoadenylyl sulfate reduction by phosphoadenylyl-sulfate reductase (thioredoxin)"/>
    <property type="evidence" value="ECO:0007669"/>
    <property type="project" value="TreeGrafter"/>
</dbReference>
<dbReference type="CDD" id="cd02027">
    <property type="entry name" value="APSK"/>
    <property type="match status" value="1"/>
</dbReference>
<dbReference type="CDD" id="cd00517">
    <property type="entry name" value="ATPS"/>
    <property type="match status" value="1"/>
</dbReference>
<dbReference type="FunFam" id="3.10.400.10:FF:000003">
    <property type="entry name" value="Sulfate adenylyltransferase"/>
    <property type="match status" value="1"/>
</dbReference>
<dbReference type="FunFam" id="3.40.50.300:FF:000802">
    <property type="entry name" value="Sulfate adenylyltransferase"/>
    <property type="match status" value="1"/>
</dbReference>
<dbReference type="FunFam" id="3.40.50.620:FF:000052">
    <property type="entry name" value="Sulfate adenylyltransferase"/>
    <property type="match status" value="1"/>
</dbReference>
<dbReference type="Gene3D" id="3.40.50.620">
    <property type="entry name" value="HUPs"/>
    <property type="match status" value="1"/>
</dbReference>
<dbReference type="Gene3D" id="3.40.50.300">
    <property type="entry name" value="P-loop containing nucleotide triphosphate hydrolases"/>
    <property type="match status" value="1"/>
</dbReference>
<dbReference type="Gene3D" id="3.10.400.10">
    <property type="entry name" value="Sulfate adenylyltransferase"/>
    <property type="match status" value="1"/>
</dbReference>
<dbReference type="HAMAP" id="MF_03106">
    <property type="entry name" value="Sulf_adenylyltr_euk"/>
    <property type="match status" value="1"/>
</dbReference>
<dbReference type="InterPro" id="IPR002891">
    <property type="entry name" value="APS_kinase"/>
</dbReference>
<dbReference type="InterPro" id="IPR025980">
    <property type="entry name" value="ATP-Sase_PUA-like_dom"/>
</dbReference>
<dbReference type="InterPro" id="IPR027417">
    <property type="entry name" value="P-loop_NTPase"/>
</dbReference>
<dbReference type="InterPro" id="IPR015947">
    <property type="entry name" value="PUA-like_sf"/>
</dbReference>
<dbReference type="InterPro" id="IPR014729">
    <property type="entry name" value="Rossmann-like_a/b/a_fold"/>
</dbReference>
<dbReference type="InterPro" id="IPR027535">
    <property type="entry name" value="Sulf_adenylyltr_euk"/>
</dbReference>
<dbReference type="InterPro" id="IPR050512">
    <property type="entry name" value="Sulf_AdTrans/APS_kinase"/>
</dbReference>
<dbReference type="InterPro" id="IPR024951">
    <property type="entry name" value="Sulfurylase_cat_dom"/>
</dbReference>
<dbReference type="InterPro" id="IPR002650">
    <property type="entry name" value="Sulphate_adenylyltransferase"/>
</dbReference>
<dbReference type="NCBIfam" id="NF004040">
    <property type="entry name" value="PRK05537.1"/>
    <property type="match status" value="1"/>
</dbReference>
<dbReference type="NCBIfam" id="TIGR00339">
    <property type="entry name" value="sopT"/>
    <property type="match status" value="1"/>
</dbReference>
<dbReference type="PANTHER" id="PTHR42700">
    <property type="entry name" value="SULFATE ADENYLYLTRANSFERASE"/>
    <property type="match status" value="1"/>
</dbReference>
<dbReference type="PANTHER" id="PTHR42700:SF1">
    <property type="entry name" value="SULFATE ADENYLYLTRANSFERASE"/>
    <property type="match status" value="1"/>
</dbReference>
<dbReference type="Pfam" id="PF01583">
    <property type="entry name" value="APS_kinase"/>
    <property type="match status" value="1"/>
</dbReference>
<dbReference type="Pfam" id="PF01747">
    <property type="entry name" value="ATP-sulfurylase"/>
    <property type="match status" value="1"/>
</dbReference>
<dbReference type="Pfam" id="PF14306">
    <property type="entry name" value="PUA_2"/>
    <property type="match status" value="1"/>
</dbReference>
<dbReference type="SUPFAM" id="SSF52374">
    <property type="entry name" value="Nucleotidylyl transferase"/>
    <property type="match status" value="1"/>
</dbReference>
<dbReference type="SUPFAM" id="SSF52540">
    <property type="entry name" value="P-loop containing nucleoside triphosphate hydrolases"/>
    <property type="match status" value="1"/>
</dbReference>
<dbReference type="SUPFAM" id="SSF88697">
    <property type="entry name" value="PUA domain-like"/>
    <property type="match status" value="1"/>
</dbReference>
<comment type="function">
    <text evidence="1">Catalyzes the first intracellular reaction of sulfate assimilation, forming adenosine-5'-phosphosulfate (APS) from inorganic sulfate and ATP. Plays an important role in sulfate activation as a component of the biosynthesis pathway of sulfur-containing amino acids.</text>
</comment>
<comment type="catalytic activity">
    <reaction evidence="1">
        <text>sulfate + ATP + H(+) = adenosine 5'-phosphosulfate + diphosphate</text>
        <dbReference type="Rhea" id="RHEA:18133"/>
        <dbReference type="ChEBI" id="CHEBI:15378"/>
        <dbReference type="ChEBI" id="CHEBI:16189"/>
        <dbReference type="ChEBI" id="CHEBI:30616"/>
        <dbReference type="ChEBI" id="CHEBI:33019"/>
        <dbReference type="ChEBI" id="CHEBI:58243"/>
        <dbReference type="EC" id="2.7.7.4"/>
    </reaction>
</comment>
<comment type="activity regulation">
    <text evidence="1">Allosterically inhibited by 3'-phosphoadenosine 5'-phosphosulfate (PAPS).</text>
</comment>
<comment type="pathway">
    <text evidence="1">Sulfur metabolism; hydrogen sulfide biosynthesis; sulfite from sulfate: step 1/3.</text>
</comment>
<comment type="subunit">
    <text evidence="1">Homohexamer. Dimer of trimers.</text>
</comment>
<comment type="subcellular location">
    <subcellularLocation>
        <location evidence="1">Cytoplasm</location>
    </subcellularLocation>
</comment>
<comment type="domain">
    <text evidence="1">The adenylyl-sulfate kinase (APS kinase) is non-functional. It is involved in allosteric regulation by PAPS. PAPS binding induces a large rotational rearrangement of domains lowering the substrate affinity of the enzyme.</text>
</comment>
<comment type="similarity">
    <text evidence="1">In the N-terminal section; belongs to the sulfate adenylyltransferase family.</text>
</comment>
<comment type="similarity">
    <text evidence="1">In the C-terminal section; belongs to the APS kinase family.</text>
</comment>
<proteinExistence type="evidence at transcript level"/>
<name>MET3_CRYNH</name>